<evidence type="ECO:0000250" key="1"/>
<evidence type="ECO:0000255" key="2"/>
<evidence type="ECO:0000256" key="3">
    <source>
        <dbReference type="SAM" id="MobiDB-lite"/>
    </source>
</evidence>
<evidence type="ECO:0000269" key="4">
    <source>
    </source>
</evidence>
<evidence type="ECO:0000305" key="5"/>
<dbReference type="EMBL" id="AB028891">
    <property type="protein sequence ID" value="BAB63459.1"/>
    <property type="molecule type" value="mRNA"/>
</dbReference>
<dbReference type="RefSeq" id="NP_476560.1">
    <property type="nucleotide sequence ID" value="NM_057212.1"/>
</dbReference>
<dbReference type="SMR" id="Q91XV7"/>
<dbReference type="FunCoup" id="Q91XV7">
    <property type="interactions" value="2"/>
</dbReference>
<dbReference type="STRING" id="10116.ENSRNOP00000006300"/>
<dbReference type="GlyCosmos" id="Q91XV7">
    <property type="glycosylation" value="1 site, No reported glycans"/>
</dbReference>
<dbReference type="GlyGen" id="Q91XV7">
    <property type="glycosylation" value="1 site"/>
</dbReference>
<dbReference type="PhosphoSitePlus" id="Q91XV7"/>
<dbReference type="jPOST" id="Q91XV7"/>
<dbReference type="PaxDb" id="10116-ENSRNOP00000006300"/>
<dbReference type="Ensembl" id="ENSRNOT00000006300.4">
    <property type="protein sequence ID" value="ENSRNOP00000006300.1"/>
    <property type="gene ID" value="ENSRNOG00000004757.4"/>
</dbReference>
<dbReference type="GeneID" id="117582"/>
<dbReference type="KEGG" id="rno:117582"/>
<dbReference type="UCSC" id="RGD:708473">
    <property type="organism name" value="rat"/>
</dbReference>
<dbReference type="AGR" id="RGD:708473"/>
<dbReference type="CTD" id="25907"/>
<dbReference type="RGD" id="708473">
    <property type="gene designation" value="Tmem158"/>
</dbReference>
<dbReference type="eggNOG" id="ENOG502RYJ7">
    <property type="taxonomic scope" value="Eukaryota"/>
</dbReference>
<dbReference type="GeneTree" id="ENSGT00390000009719"/>
<dbReference type="HOGENOM" id="CLU_085099_0_0_1"/>
<dbReference type="InParanoid" id="Q91XV7"/>
<dbReference type="OMA" id="ACLPPCQ"/>
<dbReference type="OrthoDB" id="9426648at2759"/>
<dbReference type="PhylomeDB" id="Q91XV7"/>
<dbReference type="TreeFam" id="TF339241"/>
<dbReference type="PRO" id="PR:Q91XV7"/>
<dbReference type="Proteomes" id="UP000002494">
    <property type="component" value="Chromosome 8"/>
</dbReference>
<dbReference type="Bgee" id="ENSRNOG00000004757">
    <property type="expression patterns" value="Expressed in frontal cortex and 17 other cell types or tissues"/>
</dbReference>
<dbReference type="GO" id="GO:0016020">
    <property type="term" value="C:membrane"/>
    <property type="evidence" value="ECO:0007669"/>
    <property type="project" value="UniProtKB-SubCell"/>
</dbReference>
<dbReference type="GO" id="GO:0042277">
    <property type="term" value="F:peptide binding"/>
    <property type="evidence" value="ECO:0000315"/>
    <property type="project" value="RGD"/>
</dbReference>
<dbReference type="InterPro" id="IPR038962">
    <property type="entry name" value="TMEM158"/>
</dbReference>
<dbReference type="PANTHER" id="PTHR38324">
    <property type="entry name" value="TRANSMEMBRANE PROTEIN 158"/>
    <property type="match status" value="1"/>
</dbReference>
<dbReference type="PANTHER" id="PTHR38324:SF1">
    <property type="entry name" value="TRANSMEMBRANE PROTEIN 158"/>
    <property type="match status" value="1"/>
</dbReference>
<keyword id="KW-0325">Glycoprotein</keyword>
<keyword id="KW-0472">Membrane</keyword>
<keyword id="KW-1185">Reference proteome</keyword>
<keyword id="KW-0732">Signal</keyword>
<keyword id="KW-0812">Transmembrane</keyword>
<keyword id="KW-1133">Transmembrane helix</keyword>
<name>TM158_RAT</name>
<comment type="function">
    <text evidence="1 4">Receptor for brain injury-derived neurotrophic peptide (BINP), a synthetic 13-mer peptide.</text>
</comment>
<comment type="subcellular location">
    <subcellularLocation>
        <location evidence="5">Membrane</location>
        <topology evidence="5">Multi-pass membrane protein</topology>
    </subcellularLocation>
</comment>
<comment type="tissue specificity">
    <text evidence="4">Detected only in the brain.</text>
</comment>
<comment type="PTM">
    <text evidence="4">N-glycosylated.</text>
</comment>
<comment type="similarity">
    <text evidence="5">Belongs to the TMEM158 family.</text>
</comment>
<feature type="signal peptide" evidence="2">
    <location>
        <begin position="1"/>
        <end position="20"/>
    </location>
</feature>
<feature type="chain" id="PRO_0000285130" description="Transmembrane protein 158">
    <location>
        <begin position="21"/>
        <end position="285"/>
    </location>
</feature>
<feature type="transmembrane region" description="Helical" evidence="2">
    <location>
        <begin position="215"/>
        <end position="235"/>
    </location>
</feature>
<feature type="transmembrane region" description="Helical" evidence="2">
    <location>
        <begin position="263"/>
        <end position="283"/>
    </location>
</feature>
<feature type="region of interest" description="Disordered" evidence="3">
    <location>
        <begin position="20"/>
        <end position="43"/>
    </location>
</feature>
<feature type="compositionally biased region" description="Polar residues" evidence="3">
    <location>
        <begin position="31"/>
        <end position="43"/>
    </location>
</feature>
<feature type="glycosylation site" description="N-linked (GlcNAc...) asparagine" evidence="2">
    <location>
        <position position="73"/>
    </location>
</feature>
<organism>
    <name type="scientific">Rattus norvegicus</name>
    <name type="common">Rat</name>
    <dbReference type="NCBI Taxonomy" id="10116"/>
    <lineage>
        <taxon>Eukaryota</taxon>
        <taxon>Metazoa</taxon>
        <taxon>Chordata</taxon>
        <taxon>Craniata</taxon>
        <taxon>Vertebrata</taxon>
        <taxon>Euteleostomi</taxon>
        <taxon>Mammalia</taxon>
        <taxon>Eutheria</taxon>
        <taxon>Euarchontoglires</taxon>
        <taxon>Glires</taxon>
        <taxon>Rodentia</taxon>
        <taxon>Myomorpha</taxon>
        <taxon>Muroidea</taxon>
        <taxon>Muridae</taxon>
        <taxon>Murinae</taxon>
        <taxon>Rattus</taxon>
    </lineage>
</organism>
<accession>Q91XV7</accession>
<sequence length="285" mass="29005">MLPLLAALLAAACPLPPARGGATDAPGLSGTPPNASANASFTGEHSTPRLLASAASAPPERAGPEEAPAAPCNISVQRQMLSSLLVRWGRPRGLQCDLLLFSTNAHGRAFFAAAFHRVGPPLLIEHLGLAAGGAQQDLRLCVGCGWVRGRLRAPAGAPTALPAYPAAEPGPLWLQGEPRHFCCLDFSLEELQGEPGWRLNRKPIESTLVACFMTLVIVVWSVAALIWPVPIIAGFLPNGMEQRRTTAGAPAAAPAAVPAGTTAAAAAAAAAAAAAAAVTSGVAPK</sequence>
<reference key="1">
    <citation type="journal article" date="2001" name="J. Biol. Chem.">
        <title>Identification and molecular cloning of a novel brain-specific receptor protein that binds to brain injury-derived neurotrophic peptide. Possible role for neuronal survival.</title>
        <authorList>
            <person name="Hama T."/>
            <person name="Maruyama M."/>
            <person name="Katoh-Semba R."/>
            <person name="Takizawa M."/>
            <person name="Iwashima M."/>
            <person name="Nara K."/>
        </authorList>
    </citation>
    <scope>NUCLEOTIDE SEQUENCE [MRNA]</scope>
    <scope>FUNCTION</scope>
    <scope>TISSUE SPECIFICITY</scope>
    <scope>GLYCOSYLATION</scope>
    <source>
        <tissue>Hippocampus</tissue>
    </source>
</reference>
<protein>
    <recommendedName>
        <fullName>Transmembrane protein 158</fullName>
    </recommendedName>
    <alternativeName>
        <fullName>40 kDa BINP-binding protein</fullName>
        <shortName>p40BBP</shortName>
    </alternativeName>
    <alternativeName>
        <fullName>Brain-specific binding protein</fullName>
    </alternativeName>
    <alternativeName>
        <fullName>Ras-induced senescence protein 1</fullName>
    </alternativeName>
</protein>
<gene>
    <name type="primary">Tmem158</name>
    <name type="synonym">Ris1</name>
</gene>
<proteinExistence type="evidence at protein level"/>